<sequence length="425" mass="47057">MPASLVVGTQWGDEGKAKVIDFLSKDTDIIVRYQGGANAGHTVVVHGKKYVFHLVPSGVIYDQTICVIGNGVVLDPLFFIEECDRLQKEGFPVFDKLLLSDACHLLFPYHSQIDSARETTLSQEHKIGTTKKGIGICYADKMMRTGLRVGDLLDTSYQTRLKHLVDEKNRELDKLYGMPPVSYNDINEGLKFFLSKVKKNIINTAYYLDTELKKGKRVLLEGAQGTGLDVDFGTYPYVTSSNPTTGGALIGTGIPFQHLKHVIGITKAYTTRVGEGPFPTELLGEAGEKLRQKGGEFGATTGRPRRCGWFDVEMLKHSVRINGITSIALTKIDILSDYDTIPVATGYKLNGKTLDCFPSQGLDKVEVIYEEFPGWKSDISGICEFQKLPEKCKNYISALEKWIGVKINLVSTGPDRKDTIHGDSF</sequence>
<evidence type="ECO:0000255" key="1">
    <source>
        <dbReference type="HAMAP-Rule" id="MF_00011"/>
    </source>
</evidence>
<feature type="chain" id="PRO_0000095192" description="Adenylosuccinate synthetase">
    <location>
        <begin position="1"/>
        <end position="425"/>
    </location>
</feature>
<feature type="active site" description="Proton acceptor" evidence="1">
    <location>
        <position position="13"/>
    </location>
</feature>
<feature type="active site" description="Proton donor" evidence="1">
    <location>
        <position position="41"/>
    </location>
</feature>
<feature type="binding site" evidence="1">
    <location>
        <begin position="12"/>
        <end position="18"/>
    </location>
    <ligand>
        <name>GTP</name>
        <dbReference type="ChEBI" id="CHEBI:37565"/>
    </ligand>
</feature>
<feature type="binding site" description="in other chain" evidence="1">
    <location>
        <begin position="13"/>
        <end position="16"/>
    </location>
    <ligand>
        <name>IMP</name>
        <dbReference type="ChEBI" id="CHEBI:58053"/>
        <note>ligand shared between dimeric partners</note>
    </ligand>
</feature>
<feature type="binding site" evidence="1">
    <location>
        <position position="13"/>
    </location>
    <ligand>
        <name>Mg(2+)</name>
        <dbReference type="ChEBI" id="CHEBI:18420"/>
    </ligand>
</feature>
<feature type="binding site" description="in other chain" evidence="1">
    <location>
        <begin position="38"/>
        <end position="41"/>
    </location>
    <ligand>
        <name>IMP</name>
        <dbReference type="ChEBI" id="CHEBI:58053"/>
        <note>ligand shared between dimeric partners</note>
    </ligand>
</feature>
<feature type="binding site" evidence="1">
    <location>
        <begin position="40"/>
        <end position="42"/>
    </location>
    <ligand>
        <name>GTP</name>
        <dbReference type="ChEBI" id="CHEBI:37565"/>
    </ligand>
</feature>
<feature type="binding site" evidence="1">
    <location>
        <position position="40"/>
    </location>
    <ligand>
        <name>Mg(2+)</name>
        <dbReference type="ChEBI" id="CHEBI:18420"/>
    </ligand>
</feature>
<feature type="binding site" description="in other chain" evidence="1">
    <location>
        <position position="130"/>
    </location>
    <ligand>
        <name>IMP</name>
        <dbReference type="ChEBI" id="CHEBI:58053"/>
        <note>ligand shared between dimeric partners</note>
    </ligand>
</feature>
<feature type="binding site" evidence="1">
    <location>
        <position position="144"/>
    </location>
    <ligand>
        <name>IMP</name>
        <dbReference type="ChEBI" id="CHEBI:58053"/>
        <note>ligand shared between dimeric partners</note>
    </ligand>
</feature>
<feature type="binding site" description="in other chain" evidence="1">
    <location>
        <position position="224"/>
    </location>
    <ligand>
        <name>IMP</name>
        <dbReference type="ChEBI" id="CHEBI:58053"/>
        <note>ligand shared between dimeric partners</note>
    </ligand>
</feature>
<feature type="binding site" description="in other chain" evidence="1">
    <location>
        <position position="239"/>
    </location>
    <ligand>
        <name>IMP</name>
        <dbReference type="ChEBI" id="CHEBI:58053"/>
        <note>ligand shared between dimeric partners</note>
    </ligand>
</feature>
<feature type="binding site" evidence="1">
    <location>
        <begin position="299"/>
        <end position="305"/>
    </location>
    <ligand>
        <name>substrate</name>
    </ligand>
</feature>
<feature type="binding site" description="in other chain" evidence="1">
    <location>
        <position position="303"/>
    </location>
    <ligand>
        <name>IMP</name>
        <dbReference type="ChEBI" id="CHEBI:58053"/>
        <note>ligand shared between dimeric partners</note>
    </ligand>
</feature>
<feature type="binding site" evidence="1">
    <location>
        <position position="305"/>
    </location>
    <ligand>
        <name>GTP</name>
        <dbReference type="ChEBI" id="CHEBI:37565"/>
    </ligand>
</feature>
<feature type="binding site" evidence="1">
    <location>
        <begin position="331"/>
        <end position="333"/>
    </location>
    <ligand>
        <name>GTP</name>
        <dbReference type="ChEBI" id="CHEBI:37565"/>
    </ligand>
</feature>
<feature type="binding site" evidence="1">
    <location>
        <begin position="411"/>
        <end position="413"/>
    </location>
    <ligand>
        <name>GTP</name>
        <dbReference type="ChEBI" id="CHEBI:37565"/>
    </ligand>
</feature>
<comment type="function">
    <text evidence="1">Plays an important role in the de novo pathway of purine nucleotide biosynthesis. Catalyzes the first committed step in the biosynthesis of AMP from IMP.</text>
</comment>
<comment type="catalytic activity">
    <reaction evidence="1">
        <text>IMP + L-aspartate + GTP = N(6)-(1,2-dicarboxyethyl)-AMP + GDP + phosphate + 2 H(+)</text>
        <dbReference type="Rhea" id="RHEA:15753"/>
        <dbReference type="ChEBI" id="CHEBI:15378"/>
        <dbReference type="ChEBI" id="CHEBI:29991"/>
        <dbReference type="ChEBI" id="CHEBI:37565"/>
        <dbReference type="ChEBI" id="CHEBI:43474"/>
        <dbReference type="ChEBI" id="CHEBI:57567"/>
        <dbReference type="ChEBI" id="CHEBI:58053"/>
        <dbReference type="ChEBI" id="CHEBI:58189"/>
        <dbReference type="EC" id="6.3.4.4"/>
    </reaction>
</comment>
<comment type="cofactor">
    <cofactor evidence="1">
        <name>Mg(2+)</name>
        <dbReference type="ChEBI" id="CHEBI:18420"/>
    </cofactor>
    <text evidence="1">Binds 1 Mg(2+) ion per subunit.</text>
</comment>
<comment type="pathway">
    <text evidence="1">Purine metabolism; AMP biosynthesis via de novo pathway; AMP from IMP: step 1/2.</text>
</comment>
<comment type="subunit">
    <text evidence="1">Homodimer.</text>
</comment>
<comment type="subcellular location">
    <subcellularLocation>
        <location evidence="1">Cytoplasm</location>
    </subcellularLocation>
</comment>
<comment type="similarity">
    <text evidence="1">Belongs to the adenylosuccinate synthetase family.</text>
</comment>
<proteinExistence type="inferred from homology"/>
<reference key="1">
    <citation type="journal article" date="2004" name="J. Bacteriol.">
        <title>Comparative genomics of two Leptospira interrogans serovars reveals novel insights into physiology and pathogenesis.</title>
        <authorList>
            <person name="Nascimento A.L.T.O."/>
            <person name="Ko A.I."/>
            <person name="Martins E.A.L."/>
            <person name="Monteiro-Vitorello C.B."/>
            <person name="Ho P.L."/>
            <person name="Haake D.A."/>
            <person name="Verjovski-Almeida S."/>
            <person name="Hartskeerl R.A."/>
            <person name="Marques M.V."/>
            <person name="Oliveira M.C."/>
            <person name="Menck C.F.M."/>
            <person name="Leite L.C.C."/>
            <person name="Carrer H."/>
            <person name="Coutinho L.L."/>
            <person name="Degrave W.M."/>
            <person name="Dellagostin O.A."/>
            <person name="El-Dorry H."/>
            <person name="Ferro E.S."/>
            <person name="Ferro M.I.T."/>
            <person name="Furlan L.R."/>
            <person name="Gamberini M."/>
            <person name="Giglioti E.A."/>
            <person name="Goes-Neto A."/>
            <person name="Goldman G.H."/>
            <person name="Goldman M.H.S."/>
            <person name="Harakava R."/>
            <person name="Jeronimo S.M.B."/>
            <person name="Junqueira-de-Azevedo I.L.M."/>
            <person name="Kimura E.T."/>
            <person name="Kuramae E.E."/>
            <person name="Lemos E.G.M."/>
            <person name="Lemos M.V.F."/>
            <person name="Marino C.L."/>
            <person name="Nunes L.R."/>
            <person name="de Oliveira R.C."/>
            <person name="Pereira G.G."/>
            <person name="Reis M.S."/>
            <person name="Schriefer A."/>
            <person name="Siqueira W.J."/>
            <person name="Sommer P."/>
            <person name="Tsai S.M."/>
            <person name="Simpson A.J.G."/>
            <person name="Ferro J.A."/>
            <person name="Camargo L.E.A."/>
            <person name="Kitajima J.P."/>
            <person name="Setubal J.C."/>
            <person name="Van Sluys M.A."/>
        </authorList>
    </citation>
    <scope>NUCLEOTIDE SEQUENCE [LARGE SCALE GENOMIC DNA]</scope>
    <source>
        <strain>Fiocruz L1-130</strain>
    </source>
</reference>
<name>PURA_LEPIC</name>
<gene>
    <name evidence="1" type="primary">purA</name>
    <name type="ordered locus">LIC_12565</name>
</gene>
<dbReference type="EC" id="6.3.4.4" evidence="1"/>
<dbReference type="EMBL" id="AE016823">
    <property type="protein sequence ID" value="AAS71129.1"/>
    <property type="molecule type" value="Genomic_DNA"/>
</dbReference>
<dbReference type="RefSeq" id="WP_001111751.1">
    <property type="nucleotide sequence ID" value="NC_005823.1"/>
</dbReference>
<dbReference type="SMR" id="Q72PA7"/>
<dbReference type="KEGG" id="lic:LIC_12565"/>
<dbReference type="HOGENOM" id="CLU_029848_0_0_12"/>
<dbReference type="UniPathway" id="UPA00075">
    <property type="reaction ID" value="UER00335"/>
</dbReference>
<dbReference type="Proteomes" id="UP000007037">
    <property type="component" value="Chromosome I"/>
</dbReference>
<dbReference type="GO" id="GO:0005737">
    <property type="term" value="C:cytoplasm"/>
    <property type="evidence" value="ECO:0007669"/>
    <property type="project" value="UniProtKB-SubCell"/>
</dbReference>
<dbReference type="GO" id="GO:0004019">
    <property type="term" value="F:adenylosuccinate synthase activity"/>
    <property type="evidence" value="ECO:0007669"/>
    <property type="project" value="UniProtKB-UniRule"/>
</dbReference>
<dbReference type="GO" id="GO:0005525">
    <property type="term" value="F:GTP binding"/>
    <property type="evidence" value="ECO:0007669"/>
    <property type="project" value="UniProtKB-UniRule"/>
</dbReference>
<dbReference type="GO" id="GO:0000287">
    <property type="term" value="F:magnesium ion binding"/>
    <property type="evidence" value="ECO:0007669"/>
    <property type="project" value="UniProtKB-UniRule"/>
</dbReference>
<dbReference type="GO" id="GO:0044208">
    <property type="term" value="P:'de novo' AMP biosynthetic process"/>
    <property type="evidence" value="ECO:0007669"/>
    <property type="project" value="UniProtKB-UniRule"/>
</dbReference>
<dbReference type="GO" id="GO:0046040">
    <property type="term" value="P:IMP metabolic process"/>
    <property type="evidence" value="ECO:0007669"/>
    <property type="project" value="TreeGrafter"/>
</dbReference>
<dbReference type="CDD" id="cd03108">
    <property type="entry name" value="AdSS"/>
    <property type="match status" value="1"/>
</dbReference>
<dbReference type="FunFam" id="1.10.300.10:FF:000001">
    <property type="entry name" value="Adenylosuccinate synthetase"/>
    <property type="match status" value="1"/>
</dbReference>
<dbReference type="FunFam" id="3.90.170.10:FF:000001">
    <property type="entry name" value="Adenylosuccinate synthetase"/>
    <property type="match status" value="1"/>
</dbReference>
<dbReference type="Gene3D" id="3.40.440.10">
    <property type="entry name" value="Adenylosuccinate Synthetase, subunit A, domain 1"/>
    <property type="match status" value="1"/>
</dbReference>
<dbReference type="Gene3D" id="1.10.300.10">
    <property type="entry name" value="Adenylosuccinate Synthetase, subunit A, domain 2"/>
    <property type="match status" value="1"/>
</dbReference>
<dbReference type="Gene3D" id="3.90.170.10">
    <property type="entry name" value="Adenylosuccinate Synthetase, subunit A, domain 3"/>
    <property type="match status" value="1"/>
</dbReference>
<dbReference type="HAMAP" id="MF_00011">
    <property type="entry name" value="Adenylosucc_synth"/>
    <property type="match status" value="1"/>
</dbReference>
<dbReference type="InterPro" id="IPR018220">
    <property type="entry name" value="Adenylosuccin_syn_GTP-bd"/>
</dbReference>
<dbReference type="InterPro" id="IPR042109">
    <property type="entry name" value="Adenylosuccinate_synth_dom1"/>
</dbReference>
<dbReference type="InterPro" id="IPR042110">
    <property type="entry name" value="Adenylosuccinate_synth_dom2"/>
</dbReference>
<dbReference type="InterPro" id="IPR042111">
    <property type="entry name" value="Adenylosuccinate_synth_dom3"/>
</dbReference>
<dbReference type="InterPro" id="IPR001114">
    <property type="entry name" value="Adenylosuccinate_synthetase"/>
</dbReference>
<dbReference type="InterPro" id="IPR027417">
    <property type="entry name" value="P-loop_NTPase"/>
</dbReference>
<dbReference type="NCBIfam" id="NF002223">
    <property type="entry name" value="PRK01117.1"/>
    <property type="match status" value="1"/>
</dbReference>
<dbReference type="NCBIfam" id="TIGR00184">
    <property type="entry name" value="purA"/>
    <property type="match status" value="1"/>
</dbReference>
<dbReference type="PANTHER" id="PTHR11846">
    <property type="entry name" value="ADENYLOSUCCINATE SYNTHETASE"/>
    <property type="match status" value="1"/>
</dbReference>
<dbReference type="PANTHER" id="PTHR11846:SF0">
    <property type="entry name" value="ADENYLOSUCCINATE SYNTHETASE"/>
    <property type="match status" value="1"/>
</dbReference>
<dbReference type="Pfam" id="PF00709">
    <property type="entry name" value="Adenylsucc_synt"/>
    <property type="match status" value="1"/>
</dbReference>
<dbReference type="SMART" id="SM00788">
    <property type="entry name" value="Adenylsucc_synt"/>
    <property type="match status" value="1"/>
</dbReference>
<dbReference type="SUPFAM" id="SSF52540">
    <property type="entry name" value="P-loop containing nucleoside triphosphate hydrolases"/>
    <property type="match status" value="1"/>
</dbReference>
<dbReference type="PROSITE" id="PS01266">
    <property type="entry name" value="ADENYLOSUCCIN_SYN_1"/>
    <property type="match status" value="1"/>
</dbReference>
<accession>Q72PA7</accession>
<organism>
    <name type="scientific">Leptospira interrogans serogroup Icterohaemorrhagiae serovar copenhageni (strain Fiocruz L1-130)</name>
    <dbReference type="NCBI Taxonomy" id="267671"/>
    <lineage>
        <taxon>Bacteria</taxon>
        <taxon>Pseudomonadati</taxon>
        <taxon>Spirochaetota</taxon>
        <taxon>Spirochaetia</taxon>
        <taxon>Leptospirales</taxon>
        <taxon>Leptospiraceae</taxon>
        <taxon>Leptospira</taxon>
    </lineage>
</organism>
<keyword id="KW-0963">Cytoplasm</keyword>
<keyword id="KW-0342">GTP-binding</keyword>
<keyword id="KW-0436">Ligase</keyword>
<keyword id="KW-0460">Magnesium</keyword>
<keyword id="KW-0479">Metal-binding</keyword>
<keyword id="KW-0547">Nucleotide-binding</keyword>
<keyword id="KW-0658">Purine biosynthesis</keyword>
<protein>
    <recommendedName>
        <fullName evidence="1">Adenylosuccinate synthetase</fullName>
        <shortName evidence="1">AMPSase</shortName>
        <shortName evidence="1">AdSS</shortName>
        <ecNumber evidence="1">6.3.4.4</ecNumber>
    </recommendedName>
    <alternativeName>
        <fullName evidence="1">IMP--aspartate ligase</fullName>
    </alternativeName>
</protein>